<proteinExistence type="inferred from homology"/>
<feature type="chain" id="PRO_0000281704" description="ATP-dependent RNA helicase dbp5">
    <location>
        <begin position="1"/>
        <end position="487"/>
    </location>
</feature>
<feature type="domain" description="Helicase ATP-binding" evidence="2">
    <location>
        <begin position="111"/>
        <end position="284"/>
    </location>
</feature>
<feature type="domain" description="Helicase C-terminal" evidence="3">
    <location>
        <begin position="295"/>
        <end position="468"/>
    </location>
</feature>
<feature type="region of interest" description="Disordered" evidence="4">
    <location>
        <begin position="1"/>
        <end position="50"/>
    </location>
</feature>
<feature type="short sequence motif" description="Q motif">
    <location>
        <begin position="78"/>
        <end position="106"/>
    </location>
</feature>
<feature type="short sequence motif" description="DEAD box">
    <location>
        <begin position="231"/>
        <end position="234"/>
    </location>
</feature>
<feature type="compositionally biased region" description="Basic and acidic residues" evidence="4">
    <location>
        <begin position="18"/>
        <end position="27"/>
    </location>
</feature>
<feature type="compositionally biased region" description="Polar residues" evidence="4">
    <location>
        <begin position="28"/>
        <end position="40"/>
    </location>
</feature>
<feature type="binding site" evidence="2">
    <location>
        <begin position="124"/>
        <end position="131"/>
    </location>
    <ligand>
        <name>ATP</name>
        <dbReference type="ChEBI" id="CHEBI:30616"/>
    </ligand>
</feature>
<comment type="function">
    <text evidence="1">ATP-dependent RNA helicase associated with the nuclear pore complex and essential for mRNA export from the nucleus. May participate in a terminal step of mRNA export through the removal of proteins that accompany mRNA through the nucleopore complex. May also be involved in early transcription (By similarity).</text>
</comment>
<comment type="catalytic activity">
    <reaction>
        <text>ATP + H2O = ADP + phosphate + H(+)</text>
        <dbReference type="Rhea" id="RHEA:13065"/>
        <dbReference type="ChEBI" id="CHEBI:15377"/>
        <dbReference type="ChEBI" id="CHEBI:15378"/>
        <dbReference type="ChEBI" id="CHEBI:30616"/>
        <dbReference type="ChEBI" id="CHEBI:43474"/>
        <dbReference type="ChEBI" id="CHEBI:456216"/>
        <dbReference type="EC" id="3.6.4.13"/>
    </reaction>
</comment>
<comment type="subunit">
    <text evidence="1">Associates with the nuclear pore complex.</text>
</comment>
<comment type="subcellular location">
    <subcellularLocation>
        <location evidence="1">Cytoplasm</location>
    </subcellularLocation>
    <subcellularLocation>
        <location>Nucleus</location>
        <location>Nuclear pore complex</location>
    </subcellularLocation>
    <subcellularLocation>
        <location evidence="1">Nucleus membrane</location>
        <topology evidence="1">Peripheral membrane protein</topology>
        <orientation evidence="1">Cytoplasmic side</orientation>
    </subcellularLocation>
    <text evidence="1">Nuclear pore complex cytoplasmic fibrils.</text>
</comment>
<comment type="domain">
    <text>The Q motif is unique to and characteristic of the DEAD box family of RNA helicases and controls ATP binding and hydrolysis.</text>
</comment>
<comment type="similarity">
    <text evidence="5">Belongs to the DEAD box helicase family. DDX19/DBP5 subfamily.</text>
</comment>
<dbReference type="EC" id="3.6.4.13"/>
<dbReference type="EMBL" id="CH476605">
    <property type="protein sequence ID" value="EAU31326.1"/>
    <property type="molecule type" value="Genomic_DNA"/>
</dbReference>
<dbReference type="RefSeq" id="XP_001216774.1">
    <property type="nucleotide sequence ID" value="XM_001216774.1"/>
</dbReference>
<dbReference type="SMR" id="Q0CDT1"/>
<dbReference type="STRING" id="341663.Q0CDT1"/>
<dbReference type="EnsemblFungi" id="EAU31326">
    <property type="protein sequence ID" value="EAU31326"/>
    <property type="gene ID" value="ATEG_08153"/>
</dbReference>
<dbReference type="GeneID" id="4353165"/>
<dbReference type="VEuPathDB" id="FungiDB:ATEG_08153"/>
<dbReference type="eggNOG" id="KOG0332">
    <property type="taxonomic scope" value="Eukaryota"/>
</dbReference>
<dbReference type="HOGENOM" id="CLU_003041_1_0_1"/>
<dbReference type="OMA" id="IAAETRW"/>
<dbReference type="OrthoDB" id="10265785at2759"/>
<dbReference type="Proteomes" id="UP000007963">
    <property type="component" value="Unassembled WGS sequence"/>
</dbReference>
<dbReference type="GO" id="GO:0005934">
    <property type="term" value="C:cellular bud tip"/>
    <property type="evidence" value="ECO:0007669"/>
    <property type="project" value="EnsemblFungi"/>
</dbReference>
<dbReference type="GO" id="GO:0010494">
    <property type="term" value="C:cytoplasmic stress granule"/>
    <property type="evidence" value="ECO:0007669"/>
    <property type="project" value="EnsemblFungi"/>
</dbReference>
<dbReference type="GO" id="GO:0031965">
    <property type="term" value="C:nuclear membrane"/>
    <property type="evidence" value="ECO:0007669"/>
    <property type="project" value="UniProtKB-SubCell"/>
</dbReference>
<dbReference type="GO" id="GO:0044614">
    <property type="term" value="C:nuclear pore cytoplasmic filaments"/>
    <property type="evidence" value="ECO:0007669"/>
    <property type="project" value="EnsemblFungi"/>
</dbReference>
<dbReference type="GO" id="GO:0005524">
    <property type="term" value="F:ATP binding"/>
    <property type="evidence" value="ECO:0007669"/>
    <property type="project" value="UniProtKB-KW"/>
</dbReference>
<dbReference type="GO" id="GO:0016887">
    <property type="term" value="F:ATP hydrolysis activity"/>
    <property type="evidence" value="ECO:0007669"/>
    <property type="project" value="RHEA"/>
</dbReference>
<dbReference type="GO" id="GO:0000822">
    <property type="term" value="F:inositol hexakisphosphate binding"/>
    <property type="evidence" value="ECO:0007669"/>
    <property type="project" value="EnsemblFungi"/>
</dbReference>
<dbReference type="GO" id="GO:0003723">
    <property type="term" value="F:RNA binding"/>
    <property type="evidence" value="ECO:0007669"/>
    <property type="project" value="UniProtKB-KW"/>
</dbReference>
<dbReference type="GO" id="GO:0003724">
    <property type="term" value="F:RNA helicase activity"/>
    <property type="evidence" value="ECO:0007669"/>
    <property type="project" value="UniProtKB-EC"/>
</dbReference>
<dbReference type="GO" id="GO:0016973">
    <property type="term" value="P:poly(A)+ mRNA export from nucleus"/>
    <property type="evidence" value="ECO:0007669"/>
    <property type="project" value="EnsemblFungi"/>
</dbReference>
<dbReference type="GO" id="GO:0015031">
    <property type="term" value="P:protein transport"/>
    <property type="evidence" value="ECO:0007669"/>
    <property type="project" value="UniProtKB-KW"/>
</dbReference>
<dbReference type="GO" id="GO:0006415">
    <property type="term" value="P:translational termination"/>
    <property type="evidence" value="ECO:0007669"/>
    <property type="project" value="EnsemblFungi"/>
</dbReference>
<dbReference type="GO" id="GO:0006409">
    <property type="term" value="P:tRNA export from nucleus"/>
    <property type="evidence" value="ECO:0007669"/>
    <property type="project" value="EnsemblFungi"/>
</dbReference>
<dbReference type="CDD" id="cd17963">
    <property type="entry name" value="DEADc_DDX19_DDX25"/>
    <property type="match status" value="1"/>
</dbReference>
<dbReference type="CDD" id="cd18787">
    <property type="entry name" value="SF2_C_DEAD"/>
    <property type="match status" value="1"/>
</dbReference>
<dbReference type="FunFam" id="3.40.50.300:FF:000849">
    <property type="entry name" value="ATP-dependent RNA helicase DBP5"/>
    <property type="match status" value="1"/>
</dbReference>
<dbReference type="Gene3D" id="3.40.50.300">
    <property type="entry name" value="P-loop containing nucleotide triphosphate hydrolases"/>
    <property type="match status" value="2"/>
</dbReference>
<dbReference type="InterPro" id="IPR011545">
    <property type="entry name" value="DEAD/DEAH_box_helicase_dom"/>
</dbReference>
<dbReference type="InterPro" id="IPR014001">
    <property type="entry name" value="Helicase_ATP-bd"/>
</dbReference>
<dbReference type="InterPro" id="IPR001650">
    <property type="entry name" value="Helicase_C-like"/>
</dbReference>
<dbReference type="InterPro" id="IPR027417">
    <property type="entry name" value="P-loop_NTPase"/>
</dbReference>
<dbReference type="InterPro" id="IPR000629">
    <property type="entry name" value="RNA-helicase_DEAD-box_CS"/>
</dbReference>
<dbReference type="InterPro" id="IPR014014">
    <property type="entry name" value="RNA_helicase_DEAD_Q_motif"/>
</dbReference>
<dbReference type="PANTHER" id="PTHR47958">
    <property type="entry name" value="ATP-DEPENDENT RNA HELICASE DBP3"/>
    <property type="match status" value="1"/>
</dbReference>
<dbReference type="Pfam" id="PF00270">
    <property type="entry name" value="DEAD"/>
    <property type="match status" value="1"/>
</dbReference>
<dbReference type="Pfam" id="PF00271">
    <property type="entry name" value="Helicase_C"/>
    <property type="match status" value="1"/>
</dbReference>
<dbReference type="SMART" id="SM00487">
    <property type="entry name" value="DEXDc"/>
    <property type="match status" value="1"/>
</dbReference>
<dbReference type="SMART" id="SM00490">
    <property type="entry name" value="HELICc"/>
    <property type="match status" value="1"/>
</dbReference>
<dbReference type="SUPFAM" id="SSF52540">
    <property type="entry name" value="P-loop containing nucleoside triphosphate hydrolases"/>
    <property type="match status" value="1"/>
</dbReference>
<dbReference type="PROSITE" id="PS00039">
    <property type="entry name" value="DEAD_ATP_HELICASE"/>
    <property type="match status" value="1"/>
</dbReference>
<dbReference type="PROSITE" id="PS51192">
    <property type="entry name" value="HELICASE_ATP_BIND_1"/>
    <property type="match status" value="1"/>
</dbReference>
<dbReference type="PROSITE" id="PS51194">
    <property type="entry name" value="HELICASE_CTER"/>
    <property type="match status" value="1"/>
</dbReference>
<dbReference type="PROSITE" id="PS51195">
    <property type="entry name" value="Q_MOTIF"/>
    <property type="match status" value="1"/>
</dbReference>
<organism>
    <name type="scientific">Aspergillus terreus (strain NIH 2624 / FGSC A1156)</name>
    <dbReference type="NCBI Taxonomy" id="341663"/>
    <lineage>
        <taxon>Eukaryota</taxon>
        <taxon>Fungi</taxon>
        <taxon>Dikarya</taxon>
        <taxon>Ascomycota</taxon>
        <taxon>Pezizomycotina</taxon>
        <taxon>Eurotiomycetes</taxon>
        <taxon>Eurotiomycetidae</taxon>
        <taxon>Eurotiales</taxon>
        <taxon>Aspergillaceae</taxon>
        <taxon>Aspergillus</taxon>
        <taxon>Aspergillus subgen. Circumdati</taxon>
    </lineage>
</organism>
<gene>
    <name type="primary">dbp5</name>
    <name type="ORF">ATEG_08153</name>
</gene>
<protein>
    <recommendedName>
        <fullName>ATP-dependent RNA helicase dbp5</fullName>
        <ecNumber>3.6.4.13</ecNumber>
    </recommendedName>
</protein>
<sequence>MSSEQPTEAPAGGSLADRISKPEESKPADSTQQPTDNGQTDGAPAQLGGSELHEPEYNVEVKLSDLQADPNNPLFSVKNFEDLGLDPRILQGLSAMNFRKPSKIQERALPLLLSNPPKNLVGQSQSGTGKTAAFVLNILSRLDLSTEQMQKTPQALILAPTRELARQIVGVIQVMGQFLDNLIIGTAVPADTNNRPARMEASVVVGTPGTVMDMIKKRIMVPAKLQVLVLDEADNMLDQQGLGDQCIRVKALLPRTIQVVLFSATFPTHVHQYASKFAPQANELTLQHEELTVEGIKQLYLDCSDEEDKYRTLVSLYGLLTVGSSIIFVKTRQSAMEIEKRMVAEGHTVASLTGGIEGSQRDAVIDQFRAGAAKVLITTNVLARGIDVSTVSMVINYDIPELHLPPNQPRQADFQTYLHRIGRTGRFGRVGVSISFVSNRDEWNMLNQIQKYFNTSIQRIDTKDWDEVEDIIKKTIKNPRSQATFGK</sequence>
<reference key="1">
    <citation type="submission" date="2005-09" db="EMBL/GenBank/DDBJ databases">
        <title>Annotation of the Aspergillus terreus NIH2624 genome.</title>
        <authorList>
            <person name="Birren B.W."/>
            <person name="Lander E.S."/>
            <person name="Galagan J.E."/>
            <person name="Nusbaum C."/>
            <person name="Devon K."/>
            <person name="Henn M."/>
            <person name="Ma L.-J."/>
            <person name="Jaffe D.B."/>
            <person name="Butler J."/>
            <person name="Alvarez P."/>
            <person name="Gnerre S."/>
            <person name="Grabherr M."/>
            <person name="Kleber M."/>
            <person name="Mauceli E.W."/>
            <person name="Brockman W."/>
            <person name="Rounsley S."/>
            <person name="Young S.K."/>
            <person name="LaButti K."/>
            <person name="Pushparaj V."/>
            <person name="DeCaprio D."/>
            <person name="Crawford M."/>
            <person name="Koehrsen M."/>
            <person name="Engels R."/>
            <person name="Montgomery P."/>
            <person name="Pearson M."/>
            <person name="Howarth C."/>
            <person name="Larson L."/>
            <person name="Luoma S."/>
            <person name="White J."/>
            <person name="Alvarado L."/>
            <person name="Kodira C.D."/>
            <person name="Zeng Q."/>
            <person name="Oleary S."/>
            <person name="Yandava C."/>
            <person name="Denning D.W."/>
            <person name="Nierman W.C."/>
            <person name="Milne T."/>
            <person name="Madden K."/>
        </authorList>
    </citation>
    <scope>NUCLEOTIDE SEQUENCE [LARGE SCALE GENOMIC DNA]</scope>
    <source>
        <strain>NIH 2624 / FGSC A1156</strain>
    </source>
</reference>
<keyword id="KW-0067">ATP-binding</keyword>
<keyword id="KW-0963">Cytoplasm</keyword>
<keyword id="KW-0347">Helicase</keyword>
<keyword id="KW-0378">Hydrolase</keyword>
<keyword id="KW-0472">Membrane</keyword>
<keyword id="KW-0509">mRNA transport</keyword>
<keyword id="KW-0906">Nuclear pore complex</keyword>
<keyword id="KW-0547">Nucleotide-binding</keyword>
<keyword id="KW-0539">Nucleus</keyword>
<keyword id="KW-0653">Protein transport</keyword>
<keyword id="KW-1185">Reference proteome</keyword>
<keyword id="KW-0694">RNA-binding</keyword>
<keyword id="KW-0811">Translocation</keyword>
<keyword id="KW-0813">Transport</keyword>
<name>DBP5_ASPTN</name>
<accession>Q0CDT1</accession>
<evidence type="ECO:0000250" key="1"/>
<evidence type="ECO:0000255" key="2">
    <source>
        <dbReference type="PROSITE-ProRule" id="PRU00541"/>
    </source>
</evidence>
<evidence type="ECO:0000255" key="3">
    <source>
        <dbReference type="PROSITE-ProRule" id="PRU00542"/>
    </source>
</evidence>
<evidence type="ECO:0000256" key="4">
    <source>
        <dbReference type="SAM" id="MobiDB-lite"/>
    </source>
</evidence>
<evidence type="ECO:0000305" key="5"/>